<sequence length="114" mass="12655">MLSGARCRLASALRGTRAPPSAVARRCLHASGSRPLADRGKKTEEPPRDFDPALLEFLVCPLSKKPLRYEASTNELINEELGIAYPIIDGIPNMIPQAARMTRQSKKQEEVEQR</sequence>
<reference key="1">
    <citation type="journal article" date="2004" name="Nat. Genet.">
        <title>Complete sequencing and characterization of 21,243 full-length human cDNAs.</title>
        <authorList>
            <person name="Ota T."/>
            <person name="Suzuki Y."/>
            <person name="Nishikawa T."/>
            <person name="Otsuki T."/>
            <person name="Sugiyama T."/>
            <person name="Irie R."/>
            <person name="Wakamatsu A."/>
            <person name="Hayashi K."/>
            <person name="Sato H."/>
            <person name="Nagai K."/>
            <person name="Kimura K."/>
            <person name="Makita H."/>
            <person name="Sekine M."/>
            <person name="Obayashi M."/>
            <person name="Nishi T."/>
            <person name="Shibahara T."/>
            <person name="Tanaka T."/>
            <person name="Ishii S."/>
            <person name="Yamamoto J."/>
            <person name="Saito K."/>
            <person name="Kawai Y."/>
            <person name="Isono Y."/>
            <person name="Nakamura Y."/>
            <person name="Nagahari K."/>
            <person name="Murakami K."/>
            <person name="Yasuda T."/>
            <person name="Iwayanagi T."/>
            <person name="Wagatsuma M."/>
            <person name="Shiratori A."/>
            <person name="Sudo H."/>
            <person name="Hosoiri T."/>
            <person name="Kaku Y."/>
            <person name="Kodaira H."/>
            <person name="Kondo H."/>
            <person name="Sugawara M."/>
            <person name="Takahashi M."/>
            <person name="Kanda K."/>
            <person name="Yokoi T."/>
            <person name="Furuya T."/>
            <person name="Kikkawa E."/>
            <person name="Omura Y."/>
            <person name="Abe K."/>
            <person name="Kamihara K."/>
            <person name="Katsuta N."/>
            <person name="Sato K."/>
            <person name="Tanikawa M."/>
            <person name="Yamazaki M."/>
            <person name="Ninomiya K."/>
            <person name="Ishibashi T."/>
            <person name="Yamashita H."/>
            <person name="Murakawa K."/>
            <person name="Fujimori K."/>
            <person name="Tanai H."/>
            <person name="Kimata M."/>
            <person name="Watanabe M."/>
            <person name="Hiraoka S."/>
            <person name="Chiba Y."/>
            <person name="Ishida S."/>
            <person name="Ono Y."/>
            <person name="Takiguchi S."/>
            <person name="Watanabe S."/>
            <person name="Yosida M."/>
            <person name="Hotuta T."/>
            <person name="Kusano J."/>
            <person name="Kanehori K."/>
            <person name="Takahashi-Fujii A."/>
            <person name="Hara H."/>
            <person name="Tanase T.-O."/>
            <person name="Nomura Y."/>
            <person name="Togiya S."/>
            <person name="Komai F."/>
            <person name="Hara R."/>
            <person name="Takeuchi K."/>
            <person name="Arita M."/>
            <person name="Imose N."/>
            <person name="Musashino K."/>
            <person name="Yuuki H."/>
            <person name="Oshima A."/>
            <person name="Sasaki N."/>
            <person name="Aotsuka S."/>
            <person name="Yoshikawa Y."/>
            <person name="Matsunawa H."/>
            <person name="Ichihara T."/>
            <person name="Shiohata N."/>
            <person name="Sano S."/>
            <person name="Moriya S."/>
            <person name="Momiyama H."/>
            <person name="Satoh N."/>
            <person name="Takami S."/>
            <person name="Terashima Y."/>
            <person name="Suzuki O."/>
            <person name="Nakagawa S."/>
            <person name="Senoh A."/>
            <person name="Mizoguchi H."/>
            <person name="Goto Y."/>
            <person name="Shimizu F."/>
            <person name="Wakebe H."/>
            <person name="Hishigaki H."/>
            <person name="Watanabe T."/>
            <person name="Sugiyama A."/>
            <person name="Takemoto M."/>
            <person name="Kawakami B."/>
            <person name="Yamazaki M."/>
            <person name="Watanabe K."/>
            <person name="Kumagai A."/>
            <person name="Itakura S."/>
            <person name="Fukuzumi Y."/>
            <person name="Fujimori Y."/>
            <person name="Komiyama M."/>
            <person name="Tashiro H."/>
            <person name="Tanigami A."/>
            <person name="Fujiwara T."/>
            <person name="Ono T."/>
            <person name="Yamada K."/>
            <person name="Fujii Y."/>
            <person name="Ozaki K."/>
            <person name="Hirao M."/>
            <person name="Ohmori Y."/>
            <person name="Kawabata A."/>
            <person name="Hikiji T."/>
            <person name="Kobatake N."/>
            <person name="Inagaki H."/>
            <person name="Ikema Y."/>
            <person name="Okamoto S."/>
            <person name="Okitani R."/>
            <person name="Kawakami T."/>
            <person name="Noguchi S."/>
            <person name="Itoh T."/>
            <person name="Shigeta K."/>
            <person name="Senba T."/>
            <person name="Matsumura K."/>
            <person name="Nakajima Y."/>
            <person name="Mizuno T."/>
            <person name="Morinaga M."/>
            <person name="Sasaki M."/>
            <person name="Togashi T."/>
            <person name="Oyama M."/>
            <person name="Hata H."/>
            <person name="Watanabe M."/>
            <person name="Komatsu T."/>
            <person name="Mizushima-Sugano J."/>
            <person name="Satoh T."/>
            <person name="Shirai Y."/>
            <person name="Takahashi Y."/>
            <person name="Nakagawa K."/>
            <person name="Okumura K."/>
            <person name="Nagase T."/>
            <person name="Nomura N."/>
            <person name="Kikuchi H."/>
            <person name="Masuho Y."/>
            <person name="Yamashita R."/>
            <person name="Nakai K."/>
            <person name="Yada T."/>
            <person name="Nakamura Y."/>
            <person name="Ohara O."/>
            <person name="Isogai T."/>
            <person name="Sugano S."/>
        </authorList>
    </citation>
    <scope>NUCLEOTIDE SEQUENCE [LARGE SCALE MRNA]</scope>
    <source>
        <tissue>Umbilical cord blood</tissue>
    </source>
</reference>
<reference key="2">
    <citation type="journal article" date="2005" name="Mol. Biol. Cell">
        <title>The initial enzyme for glycosylphosphatidylinositol biosynthesis requires PIG-Y, a seventh component.</title>
        <authorList>
            <person name="Murakami Y."/>
            <person name="Siripanyaphinyo U."/>
            <person name="Hong Y."/>
            <person name="Tashima Y."/>
            <person name="Maeda Y."/>
            <person name="Kinoshita T."/>
        </authorList>
    </citation>
    <scope>NUCLEOTIDE SEQUENCE [MRNA]</scope>
    <scope>IDENTIFICATION</scope>
</reference>
<reference key="3">
    <citation type="journal article" date="2004" name="Genome Res.">
        <title>The status, quality, and expansion of the NIH full-length cDNA project: the Mammalian Gene Collection (MGC).</title>
        <authorList>
            <consortium name="The MGC Project Team"/>
        </authorList>
    </citation>
    <scope>NUCLEOTIDE SEQUENCE [LARGE SCALE MRNA]</scope>
    <source>
        <tissue>Ovary</tissue>
    </source>
</reference>
<reference key="4">
    <citation type="journal article" date="2014" name="J. Proteomics">
        <title>An enzyme assisted RP-RPLC approach for in-depth analysis of human liver phosphoproteome.</title>
        <authorList>
            <person name="Bian Y."/>
            <person name="Song C."/>
            <person name="Cheng K."/>
            <person name="Dong M."/>
            <person name="Wang F."/>
            <person name="Huang J."/>
            <person name="Sun D."/>
            <person name="Wang L."/>
            <person name="Ye M."/>
            <person name="Zou H."/>
        </authorList>
    </citation>
    <scope>IDENTIFICATION BY MASS SPECTROMETRY [LARGE SCALE ANALYSIS]</scope>
    <source>
        <tissue>Liver</tissue>
    </source>
</reference>
<reference key="5">
    <citation type="journal article" date="2022" name="Nature">
        <title>Defining mitochondrial protein functions through deep multiomic profiling.</title>
        <authorList>
            <person name="Rensvold J.W."/>
            <person name="Shishkova E."/>
            <person name="Sverchkov Y."/>
            <person name="Miller I.J."/>
            <person name="Cetinkaya A."/>
            <person name="Pyle A."/>
            <person name="Manicki M."/>
            <person name="Brademan D.R."/>
            <person name="Alanay Y."/>
            <person name="Raiman J."/>
            <person name="Jochem A."/>
            <person name="Hutchins P.D."/>
            <person name="Peters S.R."/>
            <person name="Linke V."/>
            <person name="Overmyer K.A."/>
            <person name="Salome A.Z."/>
            <person name="Hebert A.S."/>
            <person name="Vincent C.E."/>
            <person name="Kwiecien N.W."/>
            <person name="Rush M.J.P."/>
            <person name="Westphall M.S."/>
            <person name="Craven M."/>
            <person name="Akarsu N.A."/>
            <person name="Taylor R.W."/>
            <person name="Coon J.J."/>
            <person name="Pagliarini D.J."/>
        </authorList>
    </citation>
    <scope>FUNCTION</scope>
    <scope>SUBCELLULAR LOCATION</scope>
    <scope>INTERACTION WITH NDUFAF5 AND COQ5</scope>
    <scope>MUTAGENESIS OF LEU-58; CYS-60 AND ILE-91</scope>
</reference>
<accession>Q96I23</accession>
<accession>B2R571</accession>
<organism>
    <name type="scientific">Homo sapiens</name>
    <name type="common">Human</name>
    <dbReference type="NCBI Taxonomy" id="9606"/>
    <lineage>
        <taxon>Eukaryota</taxon>
        <taxon>Metazoa</taxon>
        <taxon>Chordata</taxon>
        <taxon>Craniata</taxon>
        <taxon>Vertebrata</taxon>
        <taxon>Euteleostomi</taxon>
        <taxon>Mammalia</taxon>
        <taxon>Eutheria</taxon>
        <taxon>Euarchontoglires</taxon>
        <taxon>Primates</taxon>
        <taxon>Haplorrhini</taxon>
        <taxon>Catarrhini</taxon>
        <taxon>Hominidae</taxon>
        <taxon>Homo</taxon>
    </lineage>
</organism>
<evidence type="ECO:0000255" key="1"/>
<evidence type="ECO:0000256" key="2">
    <source>
        <dbReference type="SAM" id="MobiDB-lite"/>
    </source>
</evidence>
<evidence type="ECO:0000269" key="3">
    <source>
    </source>
</evidence>
<evidence type="ECO:0000303" key="4">
    <source>
    </source>
</evidence>
<evidence type="ECO:0000305" key="5"/>
<evidence type="ECO:0000312" key="6">
    <source>
        <dbReference type="HGNC" id="HGNC:44317"/>
    </source>
</evidence>
<name>PREY_HUMAN</name>
<proteinExistence type="evidence at protein level"/>
<protein>
    <recommendedName>
        <fullName evidence="5">Protein preY, mitochondrial</fullName>
    </recommendedName>
    <alternativeName>
        <fullName>PIGY upstream reading frame protein</fullName>
    </alternativeName>
</protein>
<feature type="transit peptide" description="Mitochondrion" evidence="1">
    <location>
        <begin position="1"/>
        <end position="35"/>
    </location>
</feature>
<feature type="chain" id="PRO_0000246315" description="Protein preY, mitochondrial">
    <location>
        <begin position="36"/>
        <end position="114"/>
    </location>
</feature>
<feature type="domain" description="TRM112">
    <location>
        <begin position="51"/>
        <end position="97"/>
    </location>
</feature>
<feature type="region of interest" description="Disordered" evidence="2">
    <location>
        <begin position="14"/>
        <end position="49"/>
    </location>
</feature>
<feature type="compositionally biased region" description="Basic and acidic residues" evidence="2">
    <location>
        <begin position="36"/>
        <end position="49"/>
    </location>
</feature>
<feature type="mutagenesis site" description="Loss of interaction with NDUFAF5." evidence="3">
    <original>L</original>
    <variation>K</variation>
    <location>
        <position position="58"/>
    </location>
</feature>
<feature type="mutagenesis site" description="Reduces interaction with NDUFAF5." evidence="3">
    <original>C</original>
    <variation>A</variation>
    <location>
        <position position="60"/>
    </location>
</feature>
<feature type="mutagenesis site" description="Reduces interaction with NDUFAF5." evidence="3">
    <original>I</original>
    <variation>S</variation>
    <location>
        <position position="91"/>
    </location>
</feature>
<gene>
    <name evidence="6" type="primary">PYURF</name>
    <name evidence="4" type="synonym">NDUFAFQ</name>
    <name type="synonym">PREY</name>
</gene>
<keyword id="KW-0496">Mitochondrion</keyword>
<keyword id="KW-1267">Proteomics identification</keyword>
<keyword id="KW-1185">Reference proteome</keyword>
<keyword id="KW-0809">Transit peptide</keyword>
<dbReference type="EMBL" id="AK312082">
    <property type="protein sequence ID" value="BAG35018.1"/>
    <property type="molecule type" value="mRNA"/>
</dbReference>
<dbReference type="EMBL" id="AB206972">
    <property type="status" value="NOT_ANNOTATED_CDS"/>
    <property type="molecule type" value="mRNA"/>
</dbReference>
<dbReference type="EMBL" id="BC007876">
    <property type="status" value="NOT_ANNOTATED_CDS"/>
    <property type="molecule type" value="mRNA"/>
</dbReference>
<dbReference type="CCDS" id="CCDS3631.1"/>
<dbReference type="RefSeq" id="NP_116295.1">
    <property type="nucleotide sequence ID" value="NM_032906.5"/>
</dbReference>
<dbReference type="SMR" id="Q96I23"/>
<dbReference type="BioGRID" id="3190614">
    <property type="interactions" value="7"/>
</dbReference>
<dbReference type="FunCoup" id="Q96I23">
    <property type="interactions" value="734"/>
</dbReference>
<dbReference type="IntAct" id="Q96I23">
    <property type="interactions" value="3"/>
</dbReference>
<dbReference type="STRING" id="9606.ENSP00000273968"/>
<dbReference type="PhosphoSitePlus" id="Q96I23"/>
<dbReference type="BioMuta" id="PYURF"/>
<dbReference type="DMDM" id="74732012"/>
<dbReference type="jPOST" id="Q96I23"/>
<dbReference type="MassIVE" id="Q96I23"/>
<dbReference type="PaxDb" id="9606-ENSP00000273968"/>
<dbReference type="PeptideAtlas" id="Q96I23"/>
<dbReference type="ProteomicsDB" id="76804"/>
<dbReference type="Pumba" id="Q96I23"/>
<dbReference type="TopDownProteomics" id="Q96I23"/>
<dbReference type="Antibodypedia" id="25633">
    <property type="antibodies" value="19 antibodies from 10 providers"/>
</dbReference>
<dbReference type="DNASU" id="100996939"/>
<dbReference type="Ensembl" id="ENST00000273968.5">
    <property type="protein sequence ID" value="ENSP00000273968.4"/>
    <property type="gene ID" value="ENSG00000145337.5"/>
</dbReference>
<dbReference type="GeneID" id="100996939"/>
<dbReference type="KEGG" id="hsa:100996939"/>
<dbReference type="MANE-Select" id="ENST00000273968.5">
    <property type="protein sequence ID" value="ENSP00000273968.4"/>
    <property type="RefSeq nucleotide sequence ID" value="NM_032906.5"/>
    <property type="RefSeq protein sequence ID" value="NP_116295.1"/>
</dbReference>
<dbReference type="UCSC" id="uc003hru.3">
    <property type="organism name" value="human"/>
</dbReference>
<dbReference type="AGR" id="HGNC:44317"/>
<dbReference type="CTD" id="100996939"/>
<dbReference type="DisGeNET" id="100996939"/>
<dbReference type="GeneCards" id="PYURF"/>
<dbReference type="HGNC" id="HGNC:44317">
    <property type="gene designation" value="PYURF"/>
</dbReference>
<dbReference type="HPA" id="ENSG00000145337">
    <property type="expression patterns" value="Low tissue specificity"/>
</dbReference>
<dbReference type="MalaCards" id="PYURF"/>
<dbReference type="MIM" id="619956">
    <property type="type" value="gene"/>
</dbReference>
<dbReference type="neXtProt" id="NX_Q96I23"/>
<dbReference type="OpenTargets" id="ENSG00000145337"/>
<dbReference type="PharmGKB" id="PA143485576"/>
<dbReference type="VEuPathDB" id="HostDB:ENSG00000145337"/>
<dbReference type="eggNOG" id="ENOG502S7H4">
    <property type="taxonomic scope" value="Eukaryota"/>
</dbReference>
<dbReference type="GeneTree" id="ENSGT00390000015889"/>
<dbReference type="HOGENOM" id="CLU_155659_0_0_1"/>
<dbReference type="InParanoid" id="Q96I23"/>
<dbReference type="OMA" id="RMIHQNK"/>
<dbReference type="OrthoDB" id="1884515at2759"/>
<dbReference type="PAN-GO" id="Q96I23">
    <property type="GO annotations" value="0 GO annotations based on evolutionary models"/>
</dbReference>
<dbReference type="PhylomeDB" id="Q96I23"/>
<dbReference type="PathwayCommons" id="Q96I23"/>
<dbReference type="Reactome" id="R-HSA-6799198">
    <property type="pathway name" value="Complex I biogenesis"/>
</dbReference>
<dbReference type="SignaLink" id="Q96I23"/>
<dbReference type="BioGRID-ORCS" id="100996939">
    <property type="hits" value="174 hits in 1119 CRISPR screens"/>
</dbReference>
<dbReference type="ChiTaRS" id="PYURF">
    <property type="organism name" value="human"/>
</dbReference>
<dbReference type="GenomeRNAi" id="100996939"/>
<dbReference type="Pharos" id="Q96I23">
    <property type="development level" value="Tdark"/>
</dbReference>
<dbReference type="PRO" id="PR:Q96I23"/>
<dbReference type="Proteomes" id="UP000005640">
    <property type="component" value="Chromosome 4"/>
</dbReference>
<dbReference type="RNAct" id="Q96I23">
    <property type="molecule type" value="protein"/>
</dbReference>
<dbReference type="Bgee" id="ENSG00000145337">
    <property type="expression patterns" value="Expressed in islet of Langerhans and 97 other cell types or tissues"/>
</dbReference>
<dbReference type="GO" id="GO:0005789">
    <property type="term" value="C:endoplasmic reticulum membrane"/>
    <property type="evidence" value="ECO:0000314"/>
    <property type="project" value="HGNC-UCL"/>
</dbReference>
<dbReference type="GO" id="GO:0005739">
    <property type="term" value="C:mitochondrion"/>
    <property type="evidence" value="ECO:0000314"/>
    <property type="project" value="UniProtKB"/>
</dbReference>
<dbReference type="GO" id="GO:0050821">
    <property type="term" value="P:protein stabilization"/>
    <property type="evidence" value="ECO:0000314"/>
    <property type="project" value="UniProtKB"/>
</dbReference>
<dbReference type="FunFam" id="2.20.25.10:FF:000017">
    <property type="entry name" value="protein preY, mitochondrial"/>
    <property type="match status" value="1"/>
</dbReference>
<dbReference type="Gene3D" id="2.20.25.10">
    <property type="match status" value="1"/>
</dbReference>
<dbReference type="HAMAP" id="MF_01187">
    <property type="entry name" value="UPF0434"/>
    <property type="match status" value="1"/>
</dbReference>
<dbReference type="InterPro" id="IPR005651">
    <property type="entry name" value="Trm112-like"/>
</dbReference>
<dbReference type="PANTHER" id="PTHR33505:SF7">
    <property type="entry name" value="PROTEIN PREY, MITOCHONDRIAL"/>
    <property type="match status" value="1"/>
</dbReference>
<dbReference type="PANTHER" id="PTHR33505">
    <property type="entry name" value="ZGC:162634"/>
    <property type="match status" value="1"/>
</dbReference>
<dbReference type="Pfam" id="PF03966">
    <property type="entry name" value="Trm112p"/>
    <property type="match status" value="1"/>
</dbReference>
<dbReference type="SUPFAM" id="SSF158997">
    <property type="entry name" value="Trm112p-like"/>
    <property type="match status" value="1"/>
</dbReference>
<comment type="function">
    <text evidence="3">In mitochondria, S-adenosylmethionine-dependent methyltransferase chaperone that supports both coenzyme Q biosynthesis, by stabilizing its components, such as COQ5, and NADH:ubiquinone oxidoreductase complex (complex I, MT-ND1) assembly, by stabilizing complex I assembly factors, such as NDUFAF5.</text>
</comment>
<comment type="subunit">
    <text evidence="3">Interacts (via TRM112 domain) with NDUFAF5; the interaction is direct and stabilizes NDUFAF5 protein (PubMed:35614220). Interacts with COQ5; the interaction is direct, stabilizes COQ5 protein and associates PYURF with COQ enzyme complex (PubMed:35614220).</text>
</comment>
<comment type="subcellular location">
    <subcellularLocation>
        <location evidence="3">Mitochondrion</location>
    </subcellularLocation>
</comment>
<comment type="disease">
    <text evidence="3">An homozygous frameshift variant in the second exon of PYURF have been found in a patient with profound metabolic acidosis and clinical features including muscle hypotonia, failure to thrive, developmental delay, optic atrophy, persistently elevated lactate levels in the blood and cerebrospinal fluid, and abnormal cerebellar white matter and cerebellar atrophy on magnetic resonance imaging.</text>
</comment>
<comment type="miscellaneous">
    <text>PREY and PIGY, 2 apparently unrelated proteins, are respectively the product of an upstream and a downstream ORF contained in a single bicistronic transcript.</text>
</comment>
<comment type="similarity">
    <text evidence="5">Belongs to the PREY family.</text>
</comment>